<keyword id="KW-0067">ATP-binding</keyword>
<keyword id="KW-0175">Coiled coil</keyword>
<keyword id="KW-0493">Microtubule</keyword>
<keyword id="KW-0505">Motor protein</keyword>
<keyword id="KW-0547">Nucleotide-binding</keyword>
<keyword id="KW-1185">Reference proteome</keyword>
<comment type="function">
    <text evidence="4">Acts redundantly with KIN13A to modulate cell wall synthesis and cell expansion via the THE1 pathway.</text>
</comment>
<comment type="disruption phenotype">
    <text evidence="4">Enlarged petals and leaves.</text>
</comment>
<comment type="similarity">
    <text evidence="5">Belongs to the TRAFAC class myosin-kinesin ATPase superfamily. Kinesin family. KIN-13 subfamily.</text>
</comment>
<comment type="sequence caution" evidence="7">
    <conflict type="erroneous gene model prediction">
        <sequence resource="EMBL-CDS" id="BAB02671"/>
    </conflict>
</comment>
<name>KN13B_ARATH</name>
<evidence type="ECO:0000255" key="1"/>
<evidence type="ECO:0000255" key="2">
    <source>
        <dbReference type="PROSITE-ProRule" id="PRU00283"/>
    </source>
</evidence>
<evidence type="ECO:0000256" key="3">
    <source>
        <dbReference type="SAM" id="MobiDB-lite"/>
    </source>
</evidence>
<evidence type="ECO:0000269" key="4">
    <source>
    </source>
</evidence>
<evidence type="ECO:0000303" key="5">
    <source>
    </source>
</evidence>
<evidence type="ECO:0000303" key="6">
    <source>
    </source>
</evidence>
<evidence type="ECO:0000305" key="7"/>
<evidence type="ECO:0000312" key="8">
    <source>
        <dbReference type="Araport" id="AT3G16060"/>
    </source>
</evidence>
<evidence type="ECO:0000312" key="9">
    <source>
        <dbReference type="EMBL" id="AEE75767.1"/>
    </source>
</evidence>
<evidence type="ECO:0000312" key="10">
    <source>
        <dbReference type="EMBL" id="BAB02671.1"/>
    </source>
</evidence>
<dbReference type="EMBL" id="AB012247">
    <property type="protein sequence ID" value="BAB02671.1"/>
    <property type="status" value="ALT_SEQ"/>
    <property type="molecule type" value="Genomic_DNA"/>
</dbReference>
<dbReference type="EMBL" id="CP002686">
    <property type="protein sequence ID" value="AEE75767.1"/>
    <property type="molecule type" value="Genomic_DNA"/>
</dbReference>
<dbReference type="EMBL" id="AY052352">
    <property type="protein sequence ID" value="AAK96543.1"/>
    <property type="molecule type" value="mRNA"/>
</dbReference>
<dbReference type="EMBL" id="AY059654">
    <property type="protein sequence ID" value="AAL31147.1"/>
    <property type="molecule type" value="mRNA"/>
</dbReference>
<dbReference type="RefSeq" id="NP_566534.1">
    <property type="nucleotide sequence ID" value="NM_112476.3"/>
</dbReference>
<dbReference type="SMR" id="Q940Y8"/>
<dbReference type="FunCoup" id="Q940Y8">
    <property type="interactions" value="3652"/>
</dbReference>
<dbReference type="IntAct" id="Q940Y8">
    <property type="interactions" value="1"/>
</dbReference>
<dbReference type="STRING" id="3702.Q940Y8"/>
<dbReference type="GlyGen" id="Q940Y8">
    <property type="glycosylation" value="1 site"/>
</dbReference>
<dbReference type="iPTMnet" id="Q940Y8"/>
<dbReference type="PaxDb" id="3702-AT3G16060.1"/>
<dbReference type="ProteomicsDB" id="237096"/>
<dbReference type="EnsemblPlants" id="AT3G16060.1">
    <property type="protein sequence ID" value="AT3G16060.1"/>
    <property type="gene ID" value="AT3G16060"/>
</dbReference>
<dbReference type="GeneID" id="820851"/>
<dbReference type="Gramene" id="AT3G16060.1">
    <property type="protein sequence ID" value="AT3G16060.1"/>
    <property type="gene ID" value="AT3G16060"/>
</dbReference>
<dbReference type="KEGG" id="ath:AT3G16060"/>
<dbReference type="Araport" id="AT3G16060"/>
<dbReference type="TAIR" id="AT3G16060"/>
<dbReference type="eggNOG" id="KOG0246">
    <property type="taxonomic scope" value="Eukaryota"/>
</dbReference>
<dbReference type="HOGENOM" id="CLU_001485_19_2_1"/>
<dbReference type="InParanoid" id="Q940Y8"/>
<dbReference type="OMA" id="EDSPNEF"/>
<dbReference type="OrthoDB" id="3176171at2759"/>
<dbReference type="PhylomeDB" id="Q940Y8"/>
<dbReference type="PRO" id="PR:Q940Y8"/>
<dbReference type="Proteomes" id="UP000006548">
    <property type="component" value="Chromosome 3"/>
</dbReference>
<dbReference type="ExpressionAtlas" id="Q940Y8">
    <property type="expression patterns" value="baseline and differential"/>
</dbReference>
<dbReference type="GO" id="GO:0005874">
    <property type="term" value="C:microtubule"/>
    <property type="evidence" value="ECO:0007669"/>
    <property type="project" value="UniProtKB-KW"/>
</dbReference>
<dbReference type="GO" id="GO:0005524">
    <property type="term" value="F:ATP binding"/>
    <property type="evidence" value="ECO:0007669"/>
    <property type="project" value="UniProtKB-KW"/>
</dbReference>
<dbReference type="GO" id="GO:0008017">
    <property type="term" value="F:microtubule binding"/>
    <property type="evidence" value="ECO:0007669"/>
    <property type="project" value="InterPro"/>
</dbReference>
<dbReference type="GO" id="GO:0003777">
    <property type="term" value="F:microtubule motor activity"/>
    <property type="evidence" value="ECO:0007669"/>
    <property type="project" value="InterPro"/>
</dbReference>
<dbReference type="GO" id="GO:0007018">
    <property type="term" value="P:microtubule-based movement"/>
    <property type="evidence" value="ECO:0007669"/>
    <property type="project" value="InterPro"/>
</dbReference>
<dbReference type="GO" id="GO:1903338">
    <property type="term" value="P:regulation of cell wall organization or biogenesis"/>
    <property type="evidence" value="ECO:0000315"/>
    <property type="project" value="UniProtKB"/>
</dbReference>
<dbReference type="CDD" id="cd01367">
    <property type="entry name" value="KISc_KIF2_like"/>
    <property type="match status" value="1"/>
</dbReference>
<dbReference type="FunFam" id="3.40.850.10:FF:000012">
    <property type="entry name" value="Kinesin-like protein"/>
    <property type="match status" value="1"/>
</dbReference>
<dbReference type="Gene3D" id="3.40.850.10">
    <property type="entry name" value="Kinesin motor domain"/>
    <property type="match status" value="1"/>
</dbReference>
<dbReference type="InterPro" id="IPR027640">
    <property type="entry name" value="Kinesin-like_fam"/>
</dbReference>
<dbReference type="InterPro" id="IPR019821">
    <property type="entry name" value="Kinesin_motor_CS"/>
</dbReference>
<dbReference type="InterPro" id="IPR001752">
    <property type="entry name" value="Kinesin_motor_dom"/>
</dbReference>
<dbReference type="InterPro" id="IPR036961">
    <property type="entry name" value="Kinesin_motor_dom_sf"/>
</dbReference>
<dbReference type="InterPro" id="IPR027417">
    <property type="entry name" value="P-loop_NTPase"/>
</dbReference>
<dbReference type="PANTHER" id="PTHR47971:SF9">
    <property type="entry name" value="KINESIN-LIKE PROTEIN KIN-13B"/>
    <property type="match status" value="1"/>
</dbReference>
<dbReference type="PANTHER" id="PTHR47971">
    <property type="entry name" value="KINESIN-RELATED PROTEIN 6"/>
    <property type="match status" value="1"/>
</dbReference>
<dbReference type="Pfam" id="PF00225">
    <property type="entry name" value="Kinesin"/>
    <property type="match status" value="1"/>
</dbReference>
<dbReference type="PRINTS" id="PR00380">
    <property type="entry name" value="KINESINHEAVY"/>
</dbReference>
<dbReference type="SMART" id="SM00129">
    <property type="entry name" value="KISc"/>
    <property type="match status" value="1"/>
</dbReference>
<dbReference type="SUPFAM" id="SSF52540">
    <property type="entry name" value="P-loop containing nucleoside triphosphate hydrolases"/>
    <property type="match status" value="1"/>
</dbReference>
<dbReference type="PROSITE" id="PS00411">
    <property type="entry name" value="KINESIN_MOTOR_1"/>
    <property type="match status" value="1"/>
</dbReference>
<dbReference type="PROSITE" id="PS50067">
    <property type="entry name" value="KINESIN_MOTOR_2"/>
    <property type="match status" value="1"/>
</dbReference>
<proteinExistence type="evidence at protein level"/>
<feature type="chain" id="PRO_0000437199" description="Kinesin-like protein KIN-13B">
    <location>
        <begin position="1"/>
        <end position="684"/>
    </location>
</feature>
<feature type="domain" description="Kinesin motor" evidence="2">
    <location>
        <begin position="169"/>
        <end position="492"/>
    </location>
</feature>
<feature type="region of interest" description="Disordered" evidence="3">
    <location>
        <begin position="1"/>
        <end position="31"/>
    </location>
</feature>
<feature type="region of interest" description="Disordered" evidence="3">
    <location>
        <begin position="71"/>
        <end position="103"/>
    </location>
</feature>
<feature type="region of interest" description="Disordered" evidence="3">
    <location>
        <begin position="574"/>
        <end position="594"/>
    </location>
</feature>
<feature type="coiled-coil region" evidence="1">
    <location>
        <begin position="596"/>
        <end position="626"/>
    </location>
</feature>
<feature type="compositionally biased region" description="Polar residues" evidence="3">
    <location>
        <begin position="18"/>
        <end position="31"/>
    </location>
</feature>
<feature type="compositionally biased region" description="Polar residues" evidence="3">
    <location>
        <begin position="79"/>
        <end position="91"/>
    </location>
</feature>
<feature type="compositionally biased region" description="Basic and acidic residues" evidence="3">
    <location>
        <begin position="580"/>
        <end position="594"/>
    </location>
</feature>
<feature type="binding site" evidence="2">
    <location>
        <begin position="258"/>
        <end position="265"/>
    </location>
    <ligand>
        <name>ATP</name>
        <dbReference type="ChEBI" id="CHEBI:30616"/>
    </ligand>
</feature>
<sequence length="684" mass="76772">MSGRQRSVAAAVHHQRQLSDNPLDMSSSNGRWLQSTGLQHFQSSANDYGYYAGGQGGGGQAARGYQNAQRGNEFFGEPTTPQYGARPTNQRKNNDESEFSPGLLDLHSFDTELLPEIPVSNQLDGPSLFNPSQGQSFDDFEAYNKQPNRSRVLAENLAAEKERMNAVAKIKVVVRKRPLNKKESTKNEEDIVDTHANCLTVHETKLKVDLTAYVEKHEFVFDAVLDEEVSNDEVYRETVEPVVPLIFQRIKATCFAYGQTGSGKTYTMKPLPLKASRDILRLMHHTYRNQGFQLFVSFFEIYGGKLYDLLSERKKLCMREDGKQQVCIVGLQEYRVSDTDAIMELIERGSATRSTGTTGANEESSRSHAILQLAIKKSVEGNQSKPPRLVGKLSFIDLAGSERGADTTDNDKQTRLEGAEINKSLLALKECIRALDNDQGHIPFRGSKLTEVLRDSFMGNSRTVMISCISPSSGSCEHTLNTLRYADRVKSLSKGNASKKDVSSSTMNLRESTKIPLSSALPTPSNFDDDVNEMWTEENDEFDASDYEQDKQMWKKNGKLEPSYNGMAQERIPKPTIQMKSRDMPRPDMKKSNSDDNLNALLQEEEDLVNAHRKQVEDTMNIVKEEMNLLVEADQPGNQLDGYISRLNTILSQKAAGILQLQNRLAHFQKRLREHNVLVSTTGY</sequence>
<accession>Q940Y8</accession>
<accession>Q9LW81</accession>
<organism>
    <name type="scientific">Arabidopsis thaliana</name>
    <name type="common">Mouse-ear cress</name>
    <dbReference type="NCBI Taxonomy" id="3702"/>
    <lineage>
        <taxon>Eukaryota</taxon>
        <taxon>Viridiplantae</taxon>
        <taxon>Streptophyta</taxon>
        <taxon>Embryophyta</taxon>
        <taxon>Tracheophyta</taxon>
        <taxon>Spermatophyta</taxon>
        <taxon>Magnoliopsida</taxon>
        <taxon>eudicotyledons</taxon>
        <taxon>Gunneridae</taxon>
        <taxon>Pentapetalae</taxon>
        <taxon>rosids</taxon>
        <taxon>malvids</taxon>
        <taxon>Brassicales</taxon>
        <taxon>Brassicaceae</taxon>
        <taxon>Camelineae</taxon>
        <taxon>Arabidopsis</taxon>
    </lineage>
</organism>
<reference key="1">
    <citation type="journal article" date="2000" name="DNA Res.">
        <title>Structural analysis of Arabidopsis thaliana chromosome 3. I. Sequence features of the regions of 4,504,864 bp covered by sixty P1 and TAC clones.</title>
        <authorList>
            <person name="Sato S."/>
            <person name="Nakamura Y."/>
            <person name="Kaneko T."/>
            <person name="Katoh T."/>
            <person name="Asamizu E."/>
            <person name="Tabata S."/>
        </authorList>
    </citation>
    <scope>NUCLEOTIDE SEQUENCE [LARGE SCALE GENOMIC DNA]</scope>
    <source>
        <strain>cv. Columbia</strain>
    </source>
</reference>
<reference key="2">
    <citation type="journal article" date="2017" name="Plant J.">
        <title>Araport11: a complete reannotation of the Arabidopsis thaliana reference genome.</title>
        <authorList>
            <person name="Cheng C.Y."/>
            <person name="Krishnakumar V."/>
            <person name="Chan A.P."/>
            <person name="Thibaud-Nissen F."/>
            <person name="Schobel S."/>
            <person name="Town C.D."/>
        </authorList>
    </citation>
    <scope>GENOME REANNOTATION</scope>
    <source>
        <strain>cv. Columbia</strain>
    </source>
</reference>
<reference key="3">
    <citation type="journal article" date="2003" name="Science">
        <title>Empirical analysis of transcriptional activity in the Arabidopsis genome.</title>
        <authorList>
            <person name="Yamada K."/>
            <person name="Lim J."/>
            <person name="Dale J.M."/>
            <person name="Chen H."/>
            <person name="Shinn P."/>
            <person name="Palm C.J."/>
            <person name="Southwick A.M."/>
            <person name="Wu H.C."/>
            <person name="Kim C.J."/>
            <person name="Nguyen M."/>
            <person name="Pham P.K."/>
            <person name="Cheuk R.F."/>
            <person name="Karlin-Newmann G."/>
            <person name="Liu S.X."/>
            <person name="Lam B."/>
            <person name="Sakano H."/>
            <person name="Wu T."/>
            <person name="Yu G."/>
            <person name="Miranda M."/>
            <person name="Quach H.L."/>
            <person name="Tripp M."/>
            <person name="Chang C.H."/>
            <person name="Lee J.M."/>
            <person name="Toriumi M.J."/>
            <person name="Chan M.M."/>
            <person name="Tang C.C."/>
            <person name="Onodera C.S."/>
            <person name="Deng J.M."/>
            <person name="Akiyama K."/>
            <person name="Ansari Y."/>
            <person name="Arakawa T."/>
            <person name="Banh J."/>
            <person name="Banno F."/>
            <person name="Bowser L."/>
            <person name="Brooks S.Y."/>
            <person name="Carninci P."/>
            <person name="Chao Q."/>
            <person name="Choy N."/>
            <person name="Enju A."/>
            <person name="Goldsmith A.D."/>
            <person name="Gurjal M."/>
            <person name="Hansen N.F."/>
            <person name="Hayashizaki Y."/>
            <person name="Johnson-Hopson C."/>
            <person name="Hsuan V.W."/>
            <person name="Iida K."/>
            <person name="Karnes M."/>
            <person name="Khan S."/>
            <person name="Koesema E."/>
            <person name="Ishida J."/>
            <person name="Jiang P.X."/>
            <person name="Jones T."/>
            <person name="Kawai J."/>
            <person name="Kamiya A."/>
            <person name="Meyers C."/>
            <person name="Nakajima M."/>
            <person name="Narusaka M."/>
            <person name="Seki M."/>
            <person name="Sakurai T."/>
            <person name="Satou M."/>
            <person name="Tamse R."/>
            <person name="Vaysberg M."/>
            <person name="Wallender E.K."/>
            <person name="Wong C."/>
            <person name="Yamamura Y."/>
            <person name="Yuan S."/>
            <person name="Shinozaki K."/>
            <person name="Davis R.W."/>
            <person name="Theologis A."/>
            <person name="Ecker J.R."/>
        </authorList>
    </citation>
    <scope>NUCLEOTIDE SEQUENCE [LARGE SCALE MRNA]</scope>
    <source>
        <strain>cv. Columbia</strain>
    </source>
</reference>
<reference key="4">
    <citation type="journal article" date="2001" name="BMC Genomics">
        <title>Kinesins in the Arabidopsis genome: a comparative analysis among eukaryotes.</title>
        <authorList>
            <person name="Reddy A.S."/>
            <person name="Day I.S."/>
        </authorList>
    </citation>
    <scope>GENE FAMILY</scope>
</reference>
<reference key="5">
    <citation type="journal article" date="2006" name="BMC Genomics">
        <title>Comprehensive comparative analysis of kinesins in photosynthetic eukaryotes.</title>
        <authorList>
            <person name="Richardson D.N."/>
            <person name="Simmons M.P."/>
            <person name="Reddy A.S."/>
        </authorList>
    </citation>
    <scope>GENE FAMILY</scope>
    <scope>NOMENCLATURE</scope>
</reference>
<reference key="6">
    <citation type="journal article" date="2008" name="J. Proteome Res.">
        <title>Site-specific phosphorylation profiling of Arabidopsis proteins by mass spectrometry and peptide chip analysis.</title>
        <authorList>
            <person name="de la Fuente van Bentem S."/>
            <person name="Anrather D."/>
            <person name="Dohnal I."/>
            <person name="Roitinger E."/>
            <person name="Csaszar E."/>
            <person name="Joore J."/>
            <person name="Buijnink J."/>
            <person name="Carreri A."/>
            <person name="Forzani C."/>
            <person name="Lorkovic Z.J."/>
            <person name="Barta A."/>
            <person name="Lecourieux D."/>
            <person name="Verhounig A."/>
            <person name="Jonak C."/>
            <person name="Hirt H."/>
        </authorList>
    </citation>
    <scope>IDENTIFICATION BY MASS SPECTROMETRY [LARGE SCALE ANALYSIS]</scope>
    <source>
        <tissue>Root</tissue>
    </source>
</reference>
<reference key="7">
    <citation type="journal article" date="2012" name="Protoplasma">
        <title>Functions of the Arabidopsis kinesin superfamily of microtubule-based motor proteins.</title>
        <authorList>
            <person name="Zhu C."/>
            <person name="Dixit R."/>
        </authorList>
    </citation>
    <scope>REVIEW</scope>
</reference>
<reference key="8">
    <citation type="journal article" date="2014" name="PLoS Genet.">
        <title>Atkinesin-13A modulates cell-wall synthesis and cell expansion in Arabidopsis thaliana via the THESEUS1 pathway.</title>
        <authorList>
            <person name="Fujikura U."/>
            <person name="Elsaesser L."/>
            <person name="Breuninger H."/>
            <person name="Sanchez-Rodriguez C."/>
            <person name="Ivakov A."/>
            <person name="Laux T."/>
            <person name="Findlay K."/>
            <person name="Persson S."/>
            <person name="Lenhard M."/>
        </authorList>
    </citation>
    <scope>FUNCTION</scope>
    <scope>DISRUPTION PHENOTYPE</scope>
</reference>
<protein>
    <recommendedName>
        <fullName evidence="7">Kinesin-like protein KIN-13B</fullName>
    </recommendedName>
    <alternativeName>
        <fullName evidence="6">AtKINESIN-13B</fullName>
        <shortName evidence="6">AtKIN13B</shortName>
    </alternativeName>
</protein>
<gene>
    <name evidence="7" type="primary">KIN13B</name>
    <name evidence="6" type="synonym">KINESIN-13B</name>
    <name evidence="8 9" type="ordered locus">At3g16060</name>
    <name evidence="10" type="ORF">MSL1.9</name>
</gene>